<evidence type="ECO:0000250" key="1"/>
<evidence type="ECO:0000255" key="2">
    <source>
        <dbReference type="PROSITE-ProRule" id="PRU00465"/>
    </source>
</evidence>
<evidence type="ECO:0000255" key="3">
    <source>
        <dbReference type="PROSITE-ProRule" id="PRU00711"/>
    </source>
</evidence>
<evidence type="ECO:0000255" key="4">
    <source>
        <dbReference type="PROSITE-ProRule" id="PRU01004"/>
    </source>
</evidence>
<evidence type="ECO:0000255" key="5">
    <source>
        <dbReference type="PROSITE-ProRule" id="PRU01184"/>
    </source>
</evidence>
<evidence type="ECO:0000305" key="6"/>
<organism>
    <name type="scientific">Staphylococcus aureus (strain MW2)</name>
    <dbReference type="NCBI Taxonomy" id="196620"/>
    <lineage>
        <taxon>Bacteria</taxon>
        <taxon>Bacillati</taxon>
        <taxon>Bacillota</taxon>
        <taxon>Bacilli</taxon>
        <taxon>Bacillales</taxon>
        <taxon>Staphylococcaceae</taxon>
        <taxon>Staphylococcus</taxon>
    </lineage>
</organism>
<sequence length="984" mass="111295">MQEHLVVTLDGKDYLVEPGTNLLEFIKSQDTFVPSICYNESMGPIQTCDTCTVEIDGKIERSCSTVIDRPMTVNTVNNDVKDAQKEALDRILEKHMLYCTVCDYNNGDCEIHNTMDAWGLQHQTYEYKEKPYEKDYGPFYRYDPNQCILCGRCVEACQDIEVNETIRIDWDREHPRVIWDNDVPINESSCVSCGQCATVCPCNAMMEVNMEGNAGYMTDTEPGSLAAMIDLTKKAEPGYGPLFAISDSEAEMRKERIKKTKTVCTYCGVGCSFEVWTKDREILKVQPSHDSPANKIATCVKGKFSWGHINSDQRLTKPLVRKNGEFHEVEWDEALNVIADNFTSIKEKYGPDALSFISSSKATNEESYLMQKLARQVIGTNNVDNCSRYCQAPATKGLFRTVGHGGDSGSIEDLEKAAMSVLIGTNTAEAHPVIASRMKRAQKLFGQKIHVFDIRKHEMAERADRFYQPKPGTDLAWLSAVTKYIIDHDLHDKAFIDEWVDDFDEYYKSLETFTMAFAEEATGIPESELIKFAEECAKAESVVICWAMGITQQDIGSDSSTAISNLLLVTGNYRRPGTGAYPLRGHNNVQGCSDMGSMPDKITGYQSIEADDIRAKFEKEYGVKLNPKAGKDNHEMVEGIHDGEVHSLYLYGEDTGIVDSNINFVQAAFEKLDFMVVQDEFLTFTATYADVVLPASPSLEKDGTFTNTERRIQRLYQALEPLGDSKPDWKIFQAIANRLGFDWNYKHPSEIMDEVARLTPLYAGVSYDRLEGFNSLQWPVQPDGTDEPILYLEGFNFDNGKAKLFPLSFDNYFKQDEIYDIHVNNGRLLEHFHEGNMTYQTPMIKYKVPRAFVEISPELAEDRGIHEGAEVKLISETGEAVLQVHVTDRVKGKEIYIPLNNDAMENGDLGAINLLTNSDVDQYTDTPSYKRTSCRLEVITKRGKSPLNPNNFRVNKKRHPQYSVQVQKKWERSDYVFPGNQVDK</sequence>
<comment type="catalytic activity">
    <reaction>
        <text>formate + NAD(+) = CO2 + NADH</text>
        <dbReference type="Rhea" id="RHEA:15985"/>
        <dbReference type="ChEBI" id="CHEBI:15740"/>
        <dbReference type="ChEBI" id="CHEBI:16526"/>
        <dbReference type="ChEBI" id="CHEBI:57540"/>
        <dbReference type="ChEBI" id="CHEBI:57945"/>
        <dbReference type="EC" id="1.17.1.9"/>
    </reaction>
</comment>
<comment type="cofactor">
    <cofactor evidence="1">
        <name>[2Fe-2S] cluster</name>
        <dbReference type="ChEBI" id="CHEBI:190135"/>
    </cofactor>
    <text evidence="1">Binds 1 [2Fe-2S] cluster.</text>
</comment>
<comment type="cofactor">
    <cofactor evidence="1">
        <name>[4Fe-4S] cluster</name>
        <dbReference type="ChEBI" id="CHEBI:49883"/>
    </cofactor>
    <text evidence="1">Binds 4 [4Fe-4S] clusters.</text>
</comment>
<comment type="cofactor">
    <cofactor evidence="1">
        <name>Mo-bis(molybdopterin guanine dinucleotide)</name>
        <dbReference type="ChEBI" id="CHEBI:60539"/>
    </cofactor>
    <text evidence="1">Binds 1 molybdenum-bis(molybdopterin guanine dinucleotide) (Mo-bis-MGD) cofactor per subunit.</text>
</comment>
<comment type="similarity">
    <text evidence="6">In the C-terminal section; belongs to the prokaryotic molybdopterin-containing oxidoreductase family.</text>
</comment>
<accession>Q7A057</accession>
<protein>
    <recommendedName>
        <fullName>Putative formate dehydrogenase MW2229</fullName>
        <ecNumber>1.17.1.9</ecNumber>
    </recommendedName>
</protein>
<reference key="1">
    <citation type="journal article" date="2002" name="Lancet">
        <title>Genome and virulence determinants of high virulence community-acquired MRSA.</title>
        <authorList>
            <person name="Baba T."/>
            <person name="Takeuchi F."/>
            <person name="Kuroda M."/>
            <person name="Yuzawa H."/>
            <person name="Aoki K."/>
            <person name="Oguchi A."/>
            <person name="Nagai Y."/>
            <person name="Iwama N."/>
            <person name="Asano K."/>
            <person name="Naimi T."/>
            <person name="Kuroda H."/>
            <person name="Cui L."/>
            <person name="Yamamoto K."/>
            <person name="Hiramatsu K."/>
        </authorList>
    </citation>
    <scope>NUCLEOTIDE SEQUENCE [LARGE SCALE GENOMIC DNA]</scope>
    <source>
        <strain>MW2</strain>
    </source>
</reference>
<name>FDHL_STAAW</name>
<dbReference type="EC" id="1.17.1.9"/>
<dbReference type="EMBL" id="BA000033">
    <property type="protein sequence ID" value="BAB96094.1"/>
    <property type="molecule type" value="Genomic_DNA"/>
</dbReference>
<dbReference type="SMR" id="Q7A057"/>
<dbReference type="KEGG" id="sam:MW2229"/>
<dbReference type="HOGENOM" id="CLU_000422_2_1_9"/>
<dbReference type="GO" id="GO:0016020">
    <property type="term" value="C:membrane"/>
    <property type="evidence" value="ECO:0007669"/>
    <property type="project" value="TreeGrafter"/>
</dbReference>
<dbReference type="GO" id="GO:0051537">
    <property type="term" value="F:2 iron, 2 sulfur cluster binding"/>
    <property type="evidence" value="ECO:0007669"/>
    <property type="project" value="UniProtKB-KW"/>
</dbReference>
<dbReference type="GO" id="GO:0051539">
    <property type="term" value="F:4 iron, 4 sulfur cluster binding"/>
    <property type="evidence" value="ECO:0007669"/>
    <property type="project" value="UniProtKB-KW"/>
</dbReference>
<dbReference type="GO" id="GO:0008863">
    <property type="term" value="F:formate dehydrogenase (NAD+) activity"/>
    <property type="evidence" value="ECO:0007669"/>
    <property type="project" value="UniProtKB-EC"/>
</dbReference>
<dbReference type="GO" id="GO:0046872">
    <property type="term" value="F:metal ion binding"/>
    <property type="evidence" value="ECO:0007669"/>
    <property type="project" value="UniProtKB-KW"/>
</dbReference>
<dbReference type="GO" id="GO:0043546">
    <property type="term" value="F:molybdopterin cofactor binding"/>
    <property type="evidence" value="ECO:0007669"/>
    <property type="project" value="InterPro"/>
</dbReference>
<dbReference type="GO" id="GO:0003954">
    <property type="term" value="F:NADH dehydrogenase activity"/>
    <property type="evidence" value="ECO:0007669"/>
    <property type="project" value="TreeGrafter"/>
</dbReference>
<dbReference type="GO" id="GO:0015942">
    <property type="term" value="P:formate metabolic process"/>
    <property type="evidence" value="ECO:0007669"/>
    <property type="project" value="InterPro"/>
</dbReference>
<dbReference type="GO" id="GO:0022904">
    <property type="term" value="P:respiratory electron transport chain"/>
    <property type="evidence" value="ECO:0007669"/>
    <property type="project" value="TreeGrafter"/>
</dbReference>
<dbReference type="CDD" id="cd00207">
    <property type="entry name" value="fer2"/>
    <property type="match status" value="1"/>
</dbReference>
<dbReference type="CDD" id="cd02792">
    <property type="entry name" value="MopB_CT_Formate-Dh-Na-like"/>
    <property type="match status" value="1"/>
</dbReference>
<dbReference type="CDD" id="cd02753">
    <property type="entry name" value="MopB_Formate-Dh-H"/>
    <property type="match status" value="1"/>
</dbReference>
<dbReference type="FunFam" id="2.20.25.90:FF:000001">
    <property type="entry name" value="Formate dehydrogenase subunit alpha"/>
    <property type="match status" value="1"/>
</dbReference>
<dbReference type="FunFam" id="3.10.20.740:FF:000003">
    <property type="entry name" value="Formate dehydrogenase subunit alpha"/>
    <property type="match status" value="1"/>
</dbReference>
<dbReference type="FunFam" id="3.40.228.10:FF:000002">
    <property type="entry name" value="Formate dehydrogenase subunit alpha"/>
    <property type="match status" value="1"/>
</dbReference>
<dbReference type="FunFam" id="3.30.70.20:FF:000032">
    <property type="entry name" value="Formate dehydrogenase, alpha subunit"/>
    <property type="match status" value="1"/>
</dbReference>
<dbReference type="FunFam" id="2.40.40.20:FF:000005">
    <property type="entry name" value="Periplasmic nitrate reductase"/>
    <property type="match status" value="1"/>
</dbReference>
<dbReference type="Gene3D" id="2.40.40.20">
    <property type="match status" value="1"/>
</dbReference>
<dbReference type="Gene3D" id="3.10.20.740">
    <property type="match status" value="1"/>
</dbReference>
<dbReference type="Gene3D" id="3.30.70.20">
    <property type="match status" value="1"/>
</dbReference>
<dbReference type="Gene3D" id="3.40.50.740">
    <property type="match status" value="1"/>
</dbReference>
<dbReference type="Gene3D" id="2.20.25.90">
    <property type="entry name" value="ADC-like domains"/>
    <property type="match status" value="1"/>
</dbReference>
<dbReference type="Gene3D" id="3.40.228.10">
    <property type="entry name" value="Dimethylsulfoxide Reductase, domain 2"/>
    <property type="match status" value="1"/>
</dbReference>
<dbReference type="InterPro" id="IPR036010">
    <property type="entry name" value="2Fe-2S_ferredoxin-like_sf"/>
</dbReference>
<dbReference type="InterPro" id="IPR001041">
    <property type="entry name" value="2Fe-2S_ferredoxin-type"/>
</dbReference>
<dbReference type="InterPro" id="IPR017896">
    <property type="entry name" value="4Fe4S_Fe-S-bd"/>
</dbReference>
<dbReference type="InterPro" id="IPR017900">
    <property type="entry name" value="4Fe4S_Fe_S_CS"/>
</dbReference>
<dbReference type="InterPro" id="IPR009010">
    <property type="entry name" value="Asp_de-COase-like_dom_sf"/>
</dbReference>
<dbReference type="InterPro" id="IPR041924">
    <property type="entry name" value="Formate_Dh-H_N"/>
</dbReference>
<dbReference type="InterPro" id="IPR006478">
    <property type="entry name" value="Formate_DH_asu"/>
</dbReference>
<dbReference type="InterPro" id="IPR006657">
    <property type="entry name" value="MoPterin_dinucl-bd_dom"/>
</dbReference>
<dbReference type="InterPro" id="IPR006656">
    <property type="entry name" value="Mopterin_OxRdtase"/>
</dbReference>
<dbReference type="InterPro" id="IPR006963">
    <property type="entry name" value="Mopterin_OxRdtase_4Fe-4S_dom"/>
</dbReference>
<dbReference type="InterPro" id="IPR006655">
    <property type="entry name" value="Mopterin_OxRdtase_prok_CS"/>
</dbReference>
<dbReference type="InterPro" id="IPR027467">
    <property type="entry name" value="MopterinOxRdtase_cofactor_BS"/>
</dbReference>
<dbReference type="InterPro" id="IPR019574">
    <property type="entry name" value="NADH_UbQ_OxRdtase_Gsu_4Fe4S-bd"/>
</dbReference>
<dbReference type="InterPro" id="IPR050123">
    <property type="entry name" value="Prok_molybdopt-oxidoreductase"/>
</dbReference>
<dbReference type="NCBIfam" id="TIGR01591">
    <property type="entry name" value="Fdh-alpha"/>
    <property type="match status" value="1"/>
</dbReference>
<dbReference type="PANTHER" id="PTHR43105:SF14">
    <property type="entry name" value="FORMATE DEHYDROGENASE H"/>
    <property type="match status" value="1"/>
</dbReference>
<dbReference type="PANTHER" id="PTHR43105">
    <property type="entry name" value="RESPIRATORY NITRATE REDUCTASE"/>
    <property type="match status" value="1"/>
</dbReference>
<dbReference type="Pfam" id="PF13510">
    <property type="entry name" value="Fer2_4"/>
    <property type="match status" value="1"/>
</dbReference>
<dbReference type="Pfam" id="PF12838">
    <property type="entry name" value="Fer4_7"/>
    <property type="match status" value="1"/>
</dbReference>
<dbReference type="Pfam" id="PF04879">
    <property type="entry name" value="Molybdop_Fe4S4"/>
    <property type="match status" value="1"/>
</dbReference>
<dbReference type="Pfam" id="PF00384">
    <property type="entry name" value="Molybdopterin"/>
    <property type="match status" value="1"/>
</dbReference>
<dbReference type="Pfam" id="PF01568">
    <property type="entry name" value="Molydop_binding"/>
    <property type="match status" value="1"/>
</dbReference>
<dbReference type="Pfam" id="PF10588">
    <property type="entry name" value="NADH-G_4Fe-4S_3"/>
    <property type="match status" value="1"/>
</dbReference>
<dbReference type="PIRSF" id="PIRSF036643">
    <property type="entry name" value="FDH_alpha"/>
    <property type="match status" value="1"/>
</dbReference>
<dbReference type="SMART" id="SM00926">
    <property type="entry name" value="Molybdop_Fe4S4"/>
    <property type="match status" value="1"/>
</dbReference>
<dbReference type="SMART" id="SM00929">
    <property type="entry name" value="NADH-G_4Fe-4S_3"/>
    <property type="match status" value="1"/>
</dbReference>
<dbReference type="SUPFAM" id="SSF54292">
    <property type="entry name" value="2Fe-2S ferredoxin-like"/>
    <property type="match status" value="1"/>
</dbReference>
<dbReference type="SUPFAM" id="SSF54862">
    <property type="entry name" value="4Fe-4S ferredoxins"/>
    <property type="match status" value="1"/>
</dbReference>
<dbReference type="SUPFAM" id="SSF50692">
    <property type="entry name" value="ADC-like"/>
    <property type="match status" value="1"/>
</dbReference>
<dbReference type="SUPFAM" id="SSF53706">
    <property type="entry name" value="Formate dehydrogenase/DMSO reductase, domains 1-3"/>
    <property type="match status" value="1"/>
</dbReference>
<dbReference type="PROSITE" id="PS51085">
    <property type="entry name" value="2FE2S_FER_2"/>
    <property type="match status" value="1"/>
</dbReference>
<dbReference type="PROSITE" id="PS00198">
    <property type="entry name" value="4FE4S_FER_1"/>
    <property type="match status" value="1"/>
</dbReference>
<dbReference type="PROSITE" id="PS51379">
    <property type="entry name" value="4FE4S_FER_2"/>
    <property type="match status" value="2"/>
</dbReference>
<dbReference type="PROSITE" id="PS51839">
    <property type="entry name" value="4FE4S_HC3"/>
    <property type="match status" value="1"/>
</dbReference>
<dbReference type="PROSITE" id="PS51669">
    <property type="entry name" value="4FE4S_MOW_BIS_MGD"/>
    <property type="match status" value="1"/>
</dbReference>
<dbReference type="PROSITE" id="PS00551">
    <property type="entry name" value="MOLYBDOPTERIN_PROK_1"/>
    <property type="match status" value="1"/>
</dbReference>
<dbReference type="PROSITE" id="PS00932">
    <property type="entry name" value="MOLYBDOPTERIN_PROK_3"/>
    <property type="match status" value="1"/>
</dbReference>
<gene>
    <name type="ordered locus">MW2229</name>
</gene>
<keyword id="KW-0001">2Fe-2S</keyword>
<keyword id="KW-0004">4Fe-4S</keyword>
<keyword id="KW-0408">Iron</keyword>
<keyword id="KW-0411">Iron-sulfur</keyword>
<keyword id="KW-0479">Metal-binding</keyword>
<keyword id="KW-0500">Molybdenum</keyword>
<keyword id="KW-0520">NAD</keyword>
<keyword id="KW-0560">Oxidoreductase</keyword>
<keyword id="KW-0677">Repeat</keyword>
<proteinExistence type="inferred from homology"/>
<feature type="chain" id="PRO_0000304133" description="Putative formate dehydrogenase MW2229">
    <location>
        <begin position="1"/>
        <end position="984"/>
    </location>
</feature>
<feature type="domain" description="2Fe-2S ferredoxin-type" evidence="2">
    <location>
        <begin position="3"/>
        <end position="79"/>
    </location>
</feature>
<feature type="domain" description="4Fe-4S His(Cys)3-ligated-type" evidence="5">
    <location>
        <begin position="79"/>
        <end position="119"/>
    </location>
</feature>
<feature type="domain" description="4Fe-4S ferredoxin-type 1" evidence="3">
    <location>
        <begin position="138"/>
        <end position="165"/>
    </location>
</feature>
<feature type="domain" description="4Fe-4S ferredoxin-type 2" evidence="3">
    <location>
        <begin position="181"/>
        <end position="211"/>
    </location>
</feature>
<feature type="domain" description="4Fe-4S Mo/W bis-MGD-type" evidence="4">
    <location>
        <begin position="257"/>
        <end position="313"/>
    </location>
</feature>
<feature type="region of interest" description="Formate dehydrogenase">
    <location>
        <begin position="252"/>
        <end position="984"/>
    </location>
</feature>
<feature type="binding site" evidence="1">
    <location>
        <position position="37"/>
    </location>
    <ligand>
        <name>[2Fe-2S] cluster</name>
        <dbReference type="ChEBI" id="CHEBI:190135"/>
    </ligand>
</feature>
<feature type="binding site" evidence="1">
    <location>
        <position position="48"/>
    </location>
    <ligand>
        <name>[2Fe-2S] cluster</name>
        <dbReference type="ChEBI" id="CHEBI:190135"/>
    </ligand>
</feature>
<feature type="binding site" evidence="1">
    <location>
        <position position="51"/>
    </location>
    <ligand>
        <name>[2Fe-2S] cluster</name>
        <dbReference type="ChEBI" id="CHEBI:190135"/>
    </ligand>
</feature>
<feature type="binding site" evidence="1">
    <location>
        <position position="63"/>
    </location>
    <ligand>
        <name>[2Fe-2S] cluster</name>
        <dbReference type="ChEBI" id="CHEBI:190135"/>
    </ligand>
</feature>
<feature type="binding site" evidence="5">
    <location>
        <position position="95"/>
    </location>
    <ligand>
        <name>[4Fe-4S] cluster</name>
        <dbReference type="ChEBI" id="CHEBI:49883"/>
        <label>1</label>
    </ligand>
</feature>
<feature type="binding site" evidence="5">
    <location>
        <position position="99"/>
    </location>
    <ligand>
        <name>[4Fe-4S] cluster</name>
        <dbReference type="ChEBI" id="CHEBI:49883"/>
        <label>1</label>
    </ligand>
</feature>
<feature type="binding site" evidence="5">
    <location>
        <position position="102"/>
    </location>
    <ligand>
        <name>[4Fe-4S] cluster</name>
        <dbReference type="ChEBI" id="CHEBI:49883"/>
        <label>1</label>
    </ligand>
</feature>
<feature type="binding site" evidence="5">
    <location>
        <position position="109"/>
    </location>
    <ligand>
        <name>[4Fe-4S] cluster</name>
        <dbReference type="ChEBI" id="CHEBI:49883"/>
        <label>1</label>
    </ligand>
</feature>
<feature type="binding site" evidence="1">
    <location>
        <position position="147"/>
    </location>
    <ligand>
        <name>[4Fe-4S] cluster</name>
        <dbReference type="ChEBI" id="CHEBI:49883"/>
        <label>2</label>
    </ligand>
</feature>
<feature type="binding site" evidence="1">
    <location>
        <position position="150"/>
    </location>
    <ligand>
        <name>[4Fe-4S] cluster</name>
        <dbReference type="ChEBI" id="CHEBI:49883"/>
        <label>2</label>
    </ligand>
</feature>
<feature type="binding site" evidence="1">
    <location>
        <position position="153"/>
    </location>
    <ligand>
        <name>[4Fe-4S] cluster</name>
        <dbReference type="ChEBI" id="CHEBI:49883"/>
        <label>2</label>
    </ligand>
</feature>
<feature type="binding site" evidence="1">
    <location>
        <position position="157"/>
    </location>
    <ligand>
        <name>[4Fe-4S] cluster</name>
        <dbReference type="ChEBI" id="CHEBI:49883"/>
        <label>3</label>
    </ligand>
</feature>
<feature type="binding site" evidence="1">
    <location>
        <position position="190"/>
    </location>
    <ligand>
        <name>[4Fe-4S] cluster</name>
        <dbReference type="ChEBI" id="CHEBI:49883"/>
        <label>3</label>
    </ligand>
</feature>
<feature type="binding site" evidence="1">
    <location>
        <position position="193"/>
    </location>
    <ligand>
        <name>[4Fe-4S] cluster</name>
        <dbReference type="ChEBI" id="CHEBI:49883"/>
        <label>3</label>
    </ligand>
</feature>
<feature type="binding site" evidence="1">
    <location>
        <position position="196"/>
    </location>
    <ligand>
        <name>[4Fe-4S] cluster</name>
        <dbReference type="ChEBI" id="CHEBI:49883"/>
        <label>3</label>
    </ligand>
</feature>
<feature type="binding site" evidence="1">
    <location>
        <position position="200"/>
    </location>
    <ligand>
        <name>[4Fe-4S] cluster</name>
        <dbReference type="ChEBI" id="CHEBI:49883"/>
        <label>2</label>
    </ligand>
</feature>
<feature type="binding site" evidence="1">
    <location>
        <position position="264"/>
    </location>
    <ligand>
        <name>[4Fe-4S] cluster</name>
        <dbReference type="ChEBI" id="CHEBI:49883"/>
        <label>4</label>
    </ligand>
</feature>
<feature type="binding site" evidence="1">
    <location>
        <position position="267"/>
    </location>
    <ligand>
        <name>[4Fe-4S] cluster</name>
        <dbReference type="ChEBI" id="CHEBI:49883"/>
        <label>4</label>
    </ligand>
</feature>
<feature type="binding site" evidence="1">
    <location>
        <position position="271"/>
    </location>
    <ligand>
        <name>[4Fe-4S] cluster</name>
        <dbReference type="ChEBI" id="CHEBI:49883"/>
        <label>4</label>
    </ligand>
</feature>
<feature type="binding site" evidence="1">
    <location>
        <position position="299"/>
    </location>
    <ligand>
        <name>[4Fe-4S] cluster</name>
        <dbReference type="ChEBI" id="CHEBI:49883"/>
        <label>4</label>
    </ligand>
</feature>